<evidence type="ECO:0000255" key="1">
    <source>
        <dbReference type="HAMAP-Rule" id="MF_00396"/>
    </source>
</evidence>
<protein>
    <recommendedName>
        <fullName evidence="1">Cytochrome b6-f complex subunit 7</fullName>
    </recommendedName>
    <alternativeName>
        <fullName evidence="1">Cytochrome b6-f complex subunit PetM</fullName>
    </alternativeName>
    <alternativeName>
        <fullName evidence="1">Cytochrome b6-f complex subunit VII</fullName>
    </alternativeName>
</protein>
<name>PETM_SYNP6</name>
<feature type="chain" id="PRO_0000233233" description="Cytochrome b6-f complex subunit 7">
    <location>
        <begin position="1"/>
        <end position="37"/>
    </location>
</feature>
<feature type="transmembrane region" description="Helical" evidence="1">
    <location>
        <begin position="5"/>
        <end position="25"/>
    </location>
</feature>
<comment type="function">
    <text evidence="1">Component of the cytochrome b6-f complex, which mediates electron transfer between photosystem II (PSII) and photosystem I (PSI), cyclic electron flow around PSI, and state transitions.</text>
</comment>
<comment type="subunit">
    <text evidence="1">The 4 large subunits of the cytochrome b6-f complex are cytochrome b6, subunit IV (17 kDa polypeptide, PetD), cytochrome f and the Rieske protein, while the 4 small subunits are PetG, PetL, PetM and PetN. The complex functions as a dimer.</text>
</comment>
<comment type="subcellular location">
    <subcellularLocation>
        <location evidence="1">Cellular thylakoid membrane</location>
        <topology evidence="1">Single-pass membrane protein</topology>
    </subcellularLocation>
</comment>
<comment type="similarity">
    <text evidence="1">Belongs to the PetM family.</text>
</comment>
<accession>Q5N1F0</accession>
<keyword id="KW-0249">Electron transport</keyword>
<keyword id="KW-0472">Membrane</keyword>
<keyword id="KW-0602">Photosynthesis</keyword>
<keyword id="KW-0793">Thylakoid</keyword>
<keyword id="KW-0812">Transmembrane</keyword>
<keyword id="KW-1133">Transmembrane helix</keyword>
<keyword id="KW-0813">Transport</keyword>
<organism>
    <name type="scientific">Synechococcus sp. (strain ATCC 27144 / PCC 6301 / SAUG 1402/1)</name>
    <name type="common">Anacystis nidulans</name>
    <dbReference type="NCBI Taxonomy" id="269084"/>
    <lineage>
        <taxon>Bacteria</taxon>
        <taxon>Bacillati</taxon>
        <taxon>Cyanobacteriota</taxon>
        <taxon>Cyanophyceae</taxon>
        <taxon>Synechococcales</taxon>
        <taxon>Synechococcaceae</taxon>
        <taxon>Synechococcus</taxon>
    </lineage>
</organism>
<proteinExistence type="inferred from homology"/>
<dbReference type="EMBL" id="AP008231">
    <property type="protein sequence ID" value="BAD79870.1"/>
    <property type="molecule type" value="Genomic_DNA"/>
</dbReference>
<dbReference type="RefSeq" id="WP_011243990.1">
    <property type="nucleotide sequence ID" value="NZ_CP085785.1"/>
</dbReference>
<dbReference type="SMR" id="Q5N1F0"/>
<dbReference type="GeneID" id="72431315"/>
<dbReference type="KEGG" id="syc:syc1680_d"/>
<dbReference type="Proteomes" id="UP000001175">
    <property type="component" value="Chromosome"/>
</dbReference>
<dbReference type="GO" id="GO:0009512">
    <property type="term" value="C:cytochrome b6f complex"/>
    <property type="evidence" value="ECO:0007669"/>
    <property type="project" value="InterPro"/>
</dbReference>
<dbReference type="GO" id="GO:0031676">
    <property type="term" value="C:plasma membrane-derived thylakoid membrane"/>
    <property type="evidence" value="ECO:0007669"/>
    <property type="project" value="UniProtKB-SubCell"/>
</dbReference>
<dbReference type="GO" id="GO:0009055">
    <property type="term" value="F:electron transfer activity"/>
    <property type="evidence" value="ECO:0007669"/>
    <property type="project" value="UniProtKB-UniRule"/>
</dbReference>
<dbReference type="GO" id="GO:0015979">
    <property type="term" value="P:photosynthesis"/>
    <property type="evidence" value="ECO:0007669"/>
    <property type="project" value="UniProtKB-KW"/>
</dbReference>
<dbReference type="HAMAP" id="MF_00396">
    <property type="entry name" value="Cytb6_f_PetM"/>
    <property type="match status" value="1"/>
</dbReference>
<dbReference type="InterPro" id="IPR012595">
    <property type="entry name" value="PetM_cyt_b6/f_cplx_su7"/>
</dbReference>
<dbReference type="NCBIfam" id="NF008826">
    <property type="entry name" value="PRK11876.1-2"/>
    <property type="match status" value="1"/>
</dbReference>
<dbReference type="Pfam" id="PF08041">
    <property type="entry name" value="PetM"/>
    <property type="match status" value="1"/>
</dbReference>
<dbReference type="SUPFAM" id="SSF103441">
    <property type="entry name" value="PetM subunit of the cytochrome b6f complex"/>
    <property type="match status" value="1"/>
</dbReference>
<reference key="1">
    <citation type="journal article" date="2007" name="Photosyn. Res.">
        <title>Complete nucleotide sequence of the freshwater unicellular cyanobacterium Synechococcus elongatus PCC 6301 chromosome: gene content and organization.</title>
        <authorList>
            <person name="Sugita C."/>
            <person name="Ogata K."/>
            <person name="Shikata M."/>
            <person name="Jikuya H."/>
            <person name="Takano J."/>
            <person name="Furumichi M."/>
            <person name="Kanehisa M."/>
            <person name="Omata T."/>
            <person name="Sugiura M."/>
            <person name="Sugita M."/>
        </authorList>
    </citation>
    <scope>NUCLEOTIDE SEQUENCE [LARGE SCALE GENOMIC DNA]</scope>
    <source>
        <strain>ATCC 27144 / PCC 6301 / SAUG 1402/1</strain>
    </source>
</reference>
<sequence>MAGEIFGTAFLFIVLVPVGLALGAFLLKVQGVQKAEK</sequence>
<gene>
    <name evidence="1" type="primary">petM</name>
    <name type="ordered locus">syc1680_d</name>
</gene>